<organism>
    <name type="scientific">Paramecium tetraurelia</name>
    <dbReference type="NCBI Taxonomy" id="5888"/>
    <lineage>
        <taxon>Eukaryota</taxon>
        <taxon>Sar</taxon>
        <taxon>Alveolata</taxon>
        <taxon>Ciliophora</taxon>
        <taxon>Intramacronucleata</taxon>
        <taxon>Oligohymenophorea</taxon>
        <taxon>Peniculida</taxon>
        <taxon>Parameciidae</taxon>
        <taxon>Paramecium</taxon>
    </lineage>
</organism>
<proteinExistence type="inferred from homology"/>
<reference key="1">
    <citation type="journal article" date="2006" name="Nature">
        <title>Global trends of whole-genome duplications revealed by the ciliate Paramecium tetraurelia.</title>
        <authorList>
            <person name="Aury J.-M."/>
            <person name="Jaillon O."/>
            <person name="Duret L."/>
            <person name="Noel B."/>
            <person name="Jubin C."/>
            <person name="Porcel B.M."/>
            <person name="Segurens B."/>
            <person name="Daubin V."/>
            <person name="Anthouard V."/>
            <person name="Aiach N."/>
            <person name="Arnaiz O."/>
            <person name="Billaut A."/>
            <person name="Beisson J."/>
            <person name="Blanc I."/>
            <person name="Bouhouche K."/>
            <person name="Camara F."/>
            <person name="Duharcourt S."/>
            <person name="Guigo R."/>
            <person name="Gogendeau D."/>
            <person name="Katinka M."/>
            <person name="Keller A.-M."/>
            <person name="Kissmehl R."/>
            <person name="Klotz C."/>
            <person name="Koll F."/>
            <person name="Le Mouel A."/>
            <person name="Lepere G."/>
            <person name="Malinsky S."/>
            <person name="Nowacki M."/>
            <person name="Nowak J.K."/>
            <person name="Plattner H."/>
            <person name="Poulain J."/>
            <person name="Ruiz F."/>
            <person name="Serrano V."/>
            <person name="Zagulski M."/>
            <person name="Dessen P."/>
            <person name="Betermier M."/>
            <person name="Weissenbach J."/>
            <person name="Scarpelli C."/>
            <person name="Schaechter V."/>
            <person name="Sperling L."/>
            <person name="Meyer E."/>
            <person name="Cohen J."/>
            <person name="Wincker P."/>
        </authorList>
    </citation>
    <scope>NUCLEOTIDE SEQUENCE [LARGE SCALE GENOMIC DNA]</scope>
    <source>
        <strain>Stock d4-2</strain>
    </source>
</reference>
<accession>A0BLX0</accession>
<gene>
    <name type="ORF">GSPATT00030171001</name>
</gene>
<sequence length="300" mass="33535">MGPYLSQPKKDKTTTTGQGKSVIFAASEMQGWRNTMEDAHIHKPDVIQDVSIFGVFDGHGGREVAQFVEKHFIDELLKNKNFKEQKFEEALKETFLKMDELLVTPEGQKELNQYKATDTDESYAGCTANVALIYKNTLYVANAGDSRTVLCRNNANYDMSVDHKPDNPEEKSRIERAGGFVSDGRVNGNLNLSRALGDLEYKRDSKLRVNEQLIIAIPDVKKVELGPQDKFLLLGCDGVFETLNHMDLLKQVNSTLGQAQVTEELLRKAAEDLLDQLLAPDTSQGTGCDNMTTILVYLKK</sequence>
<name>PP2C2_PARTE</name>
<protein>
    <recommendedName>
        <fullName>Probable protein phosphatase 2C 2</fullName>
        <shortName>PP2C 2</shortName>
        <ecNumber>3.1.3.16</ecNumber>
    </recommendedName>
</protein>
<feature type="chain" id="PRO_0000307829" description="Probable protein phosphatase 2C 2">
    <location>
        <begin position="1"/>
        <end position="300"/>
    </location>
</feature>
<feature type="domain" description="PPM-type phosphatase" evidence="2">
    <location>
        <begin position="23"/>
        <end position="298"/>
    </location>
</feature>
<feature type="binding site" evidence="1">
    <location>
        <position position="57"/>
    </location>
    <ligand>
        <name>Mn(2+)</name>
        <dbReference type="ChEBI" id="CHEBI:29035"/>
        <label>1</label>
    </ligand>
</feature>
<feature type="binding site" evidence="1">
    <location>
        <position position="57"/>
    </location>
    <ligand>
        <name>Mn(2+)</name>
        <dbReference type="ChEBI" id="CHEBI:29035"/>
        <label>2</label>
    </ligand>
</feature>
<feature type="binding site" evidence="1">
    <location>
        <position position="58"/>
    </location>
    <ligand>
        <name>Mn(2+)</name>
        <dbReference type="ChEBI" id="CHEBI:29035"/>
        <label>1</label>
    </ligand>
</feature>
<feature type="binding site" evidence="1">
    <location>
        <position position="237"/>
    </location>
    <ligand>
        <name>Mn(2+)</name>
        <dbReference type="ChEBI" id="CHEBI:29035"/>
        <label>2</label>
    </ligand>
</feature>
<feature type="binding site" evidence="1">
    <location>
        <position position="289"/>
    </location>
    <ligand>
        <name>Mn(2+)</name>
        <dbReference type="ChEBI" id="CHEBI:29035"/>
        <label>2</label>
    </ligand>
</feature>
<dbReference type="EC" id="3.1.3.16"/>
<dbReference type="EMBL" id="CT868003">
    <property type="protein sequence ID" value="CAK59537.1"/>
    <property type="molecule type" value="Genomic_DNA"/>
</dbReference>
<dbReference type="RefSeq" id="XP_001426935.1">
    <property type="nucleotide sequence ID" value="XM_001426898.2"/>
</dbReference>
<dbReference type="SMR" id="A0BLX0"/>
<dbReference type="FunCoup" id="A0BLX0">
    <property type="interactions" value="1470"/>
</dbReference>
<dbReference type="STRING" id="5888.A0BLX0"/>
<dbReference type="EnsemblProtists" id="CAK59537">
    <property type="protein sequence ID" value="CAK59537"/>
    <property type="gene ID" value="GSPATT00030171001"/>
</dbReference>
<dbReference type="GeneID" id="5012719"/>
<dbReference type="KEGG" id="ptm:GSPATT00030171001"/>
<dbReference type="eggNOG" id="KOG0698">
    <property type="taxonomic scope" value="Eukaryota"/>
</dbReference>
<dbReference type="HOGENOM" id="CLU_013173_4_1_1"/>
<dbReference type="InParanoid" id="A0BLX0"/>
<dbReference type="OMA" id="QDNRVNG"/>
<dbReference type="OrthoDB" id="10264738at2759"/>
<dbReference type="Proteomes" id="UP000000600">
    <property type="component" value="Partially assembled WGS sequence"/>
</dbReference>
<dbReference type="GO" id="GO:0016020">
    <property type="term" value="C:membrane"/>
    <property type="evidence" value="ECO:0007669"/>
    <property type="project" value="UniProtKB-SubCell"/>
</dbReference>
<dbReference type="GO" id="GO:0046872">
    <property type="term" value="F:metal ion binding"/>
    <property type="evidence" value="ECO:0007669"/>
    <property type="project" value="UniProtKB-KW"/>
</dbReference>
<dbReference type="GO" id="GO:0004722">
    <property type="term" value="F:protein serine/threonine phosphatase activity"/>
    <property type="evidence" value="ECO:0007669"/>
    <property type="project" value="UniProtKB-EC"/>
</dbReference>
<dbReference type="GO" id="GO:0007165">
    <property type="term" value="P:signal transduction"/>
    <property type="evidence" value="ECO:0000318"/>
    <property type="project" value="GO_Central"/>
</dbReference>
<dbReference type="CDD" id="cd00143">
    <property type="entry name" value="PP2Cc"/>
    <property type="match status" value="1"/>
</dbReference>
<dbReference type="FunFam" id="3.60.40.10:FF:000064">
    <property type="entry name" value="Protein phosphatase 2C 1"/>
    <property type="match status" value="1"/>
</dbReference>
<dbReference type="Gene3D" id="3.60.40.10">
    <property type="entry name" value="PPM-type phosphatase domain"/>
    <property type="match status" value="1"/>
</dbReference>
<dbReference type="InterPro" id="IPR015655">
    <property type="entry name" value="PP2C"/>
</dbReference>
<dbReference type="InterPro" id="IPR000222">
    <property type="entry name" value="PP2C_BS"/>
</dbReference>
<dbReference type="InterPro" id="IPR036457">
    <property type="entry name" value="PPM-type-like_dom_sf"/>
</dbReference>
<dbReference type="InterPro" id="IPR001932">
    <property type="entry name" value="PPM-type_phosphatase-like_dom"/>
</dbReference>
<dbReference type="PANTHER" id="PTHR13832:SF803">
    <property type="entry name" value="PROTEIN PHOSPHATASE 1G"/>
    <property type="match status" value="1"/>
</dbReference>
<dbReference type="PANTHER" id="PTHR13832">
    <property type="entry name" value="PROTEIN PHOSPHATASE 2C"/>
    <property type="match status" value="1"/>
</dbReference>
<dbReference type="Pfam" id="PF00481">
    <property type="entry name" value="PP2C"/>
    <property type="match status" value="1"/>
</dbReference>
<dbReference type="SMART" id="SM00331">
    <property type="entry name" value="PP2C_SIG"/>
    <property type="match status" value="1"/>
</dbReference>
<dbReference type="SMART" id="SM00332">
    <property type="entry name" value="PP2Cc"/>
    <property type="match status" value="1"/>
</dbReference>
<dbReference type="SUPFAM" id="SSF81606">
    <property type="entry name" value="PP2C-like"/>
    <property type="match status" value="1"/>
</dbReference>
<dbReference type="PROSITE" id="PS01032">
    <property type="entry name" value="PPM_1"/>
    <property type="match status" value="1"/>
</dbReference>
<dbReference type="PROSITE" id="PS51746">
    <property type="entry name" value="PPM_2"/>
    <property type="match status" value="1"/>
</dbReference>
<evidence type="ECO:0000250" key="1"/>
<evidence type="ECO:0000255" key="2">
    <source>
        <dbReference type="PROSITE-ProRule" id="PRU01082"/>
    </source>
</evidence>
<evidence type="ECO:0000305" key="3"/>
<comment type="function">
    <text evidence="1">Enzyme with a broad specificity.</text>
</comment>
<comment type="catalytic activity">
    <reaction>
        <text>O-phospho-L-seryl-[protein] + H2O = L-seryl-[protein] + phosphate</text>
        <dbReference type="Rhea" id="RHEA:20629"/>
        <dbReference type="Rhea" id="RHEA-COMP:9863"/>
        <dbReference type="Rhea" id="RHEA-COMP:11604"/>
        <dbReference type="ChEBI" id="CHEBI:15377"/>
        <dbReference type="ChEBI" id="CHEBI:29999"/>
        <dbReference type="ChEBI" id="CHEBI:43474"/>
        <dbReference type="ChEBI" id="CHEBI:83421"/>
        <dbReference type="EC" id="3.1.3.16"/>
    </reaction>
</comment>
<comment type="catalytic activity">
    <reaction>
        <text>O-phospho-L-threonyl-[protein] + H2O = L-threonyl-[protein] + phosphate</text>
        <dbReference type="Rhea" id="RHEA:47004"/>
        <dbReference type="Rhea" id="RHEA-COMP:11060"/>
        <dbReference type="Rhea" id="RHEA-COMP:11605"/>
        <dbReference type="ChEBI" id="CHEBI:15377"/>
        <dbReference type="ChEBI" id="CHEBI:30013"/>
        <dbReference type="ChEBI" id="CHEBI:43474"/>
        <dbReference type="ChEBI" id="CHEBI:61977"/>
        <dbReference type="EC" id="3.1.3.16"/>
    </reaction>
</comment>
<comment type="cofactor">
    <cofactor evidence="1">
        <name>Mg(2+)</name>
        <dbReference type="ChEBI" id="CHEBI:18420"/>
    </cofactor>
    <cofactor evidence="1">
        <name>Mn(2+)</name>
        <dbReference type="ChEBI" id="CHEBI:29035"/>
    </cofactor>
    <text evidence="1">Binds 2 magnesium or manganese ions per subunit.</text>
</comment>
<comment type="subcellular location">
    <subcellularLocation>
        <location evidence="1">Membrane</location>
        <topology evidence="1">Peripheral membrane protein</topology>
    </subcellularLocation>
</comment>
<comment type="similarity">
    <text evidence="3">Belongs to the PP2C family.</text>
</comment>
<keyword id="KW-0378">Hydrolase</keyword>
<keyword id="KW-0460">Magnesium</keyword>
<keyword id="KW-0464">Manganese</keyword>
<keyword id="KW-0472">Membrane</keyword>
<keyword id="KW-0479">Metal-binding</keyword>
<keyword id="KW-0904">Protein phosphatase</keyword>
<keyword id="KW-1185">Reference proteome</keyword>